<comment type="function">
    <text evidence="1 5">Transcription factor involved in the regulation of the insulin signaling pathway. Binds to insulin-response elements (IREs) and can activate transcription of IGFBP1. Down-regulates expression of HIF1A and suppresses hypoxia-induced transcriptional activation of HIF1A-modulated genes. Also involved in negative regulation of the cell cycle. Involved in increased proteasome activity in embryonic stem cells (ESCs) by activating expression of PSMD11 in ESCs, leading to enhanced assembly of the 26S proteasome, followed by higher proteasome activity (By similarity). Represses smooth muscle cell differentiation by inhibiting the transcriptional coactivator activity of myocardin.</text>
</comment>
<comment type="subunit">
    <text evidence="1 7">Interacts with CREBBP/CBP, MYOCD, SIRT1, SRF and YWHAZ. Acetylated by CREBBP/CBP and deacetylated by SIRT1. Binding of YWHAZ inhibits DNA-binding. Interacts with USP7; the interaction is enhanced in presence of hydrogen peroxide and occurs independently of TP53. Interacts with NLK, and this inhibits monoubiquitination and transcriptional activity (By similarity). Interacts with FOXK1; the interaction inhibits MEF2C transactivation activity (PubMed:22956541).</text>
</comment>
<comment type="interaction">
    <interactant intactId="EBI-4567305">
        <id>Q9WVH3</id>
    </interactant>
    <interactant intactId="EBI-7614183">
        <id>P56558</id>
        <label>Ogt</label>
    </interactant>
    <organismsDiffer>true</organismsDiffer>
    <experiments>2</experiments>
</comment>
<comment type="subcellular location">
    <subcellularLocation>
        <location>Cytoplasm</location>
    </subcellularLocation>
    <subcellularLocation>
        <location>Nucleus</location>
    </subcellularLocation>
    <text evidence="1">When phosphorylated, translocated from nucleus to cytoplasm. Dephosphorylation triggers nuclear translocation. Monoubiquitination increases nuclear localization. When deubiquitinated, translocated from nucleus to cytoplasm (By similarity).</text>
</comment>
<comment type="tissue specificity">
    <text evidence="4 6">Strongly expressed in brown adipose tissue and weakly in white adipose tissue (at protein level). Expressed in skeletal muscle.</text>
</comment>
<comment type="induction">
    <text evidence="5">By artery ligation in proliferating neointimal smooth muscle cells.</text>
</comment>
<comment type="PTM">
    <text evidence="1">Acetylation by CREBBP/CBP is induced by oxidative stress and inhibits transcriptional activity. Deacetylation by SIRT1 is NAD-dependent and stimulates transcriptional activity (By similarity).</text>
</comment>
<comment type="PTM">
    <text evidence="1">Phosphorylation by PKB/AKT1 inhibits transcriptional activity and is responsible for cytoplasmic localization. May be phosphorylated at multiple sites by NLK (By similarity).</text>
</comment>
<comment type="PTM">
    <text evidence="1">Monoubiquitinated; monoubiquitination is induced by oxidative stress and reduced by deacetylase inhibitors; results in its relocalization to the nucleus and its increased transcriptional activity. Deubiquitinated by USP7; deubiquitination is induced by oxidative stress; enhances its interaction with USP7 and consequently, deubiquitination; increases its translocation to the cytoplasm and inhibits its transcriptional activity. Hydrogene-peroxide-induced ubiquitination and USP7-mediated deubiquitination have no major effect on its protein stability (By similarity).</text>
</comment>
<evidence type="ECO:0000250" key="1">
    <source>
        <dbReference type="UniProtKB" id="P98177"/>
    </source>
</evidence>
<evidence type="ECO:0000255" key="2">
    <source>
        <dbReference type="PROSITE-ProRule" id="PRU00089"/>
    </source>
</evidence>
<evidence type="ECO:0000256" key="3">
    <source>
        <dbReference type="SAM" id="MobiDB-lite"/>
    </source>
</evidence>
<evidence type="ECO:0000269" key="4">
    <source>
    </source>
</evidence>
<evidence type="ECO:0000269" key="5">
    <source>
    </source>
</evidence>
<evidence type="ECO:0000269" key="6">
    <source>
    </source>
</evidence>
<evidence type="ECO:0000269" key="7">
    <source>
    </source>
</evidence>
<gene>
    <name type="primary">Foxo4</name>
    <name type="synonym">Afx</name>
    <name type="synonym">Afx1</name>
    <name type="synonym">Fkhr3</name>
    <name type="synonym">Mllt7</name>
</gene>
<keyword id="KW-0007">Acetylation</keyword>
<keyword id="KW-0010">Activator</keyword>
<keyword id="KW-0131">Cell cycle</keyword>
<keyword id="KW-0963">Cytoplasm</keyword>
<keyword id="KW-0217">Developmental protein</keyword>
<keyword id="KW-0221">Differentiation</keyword>
<keyword id="KW-0238">DNA-binding</keyword>
<keyword id="KW-0517">Myogenesis</keyword>
<keyword id="KW-0539">Nucleus</keyword>
<keyword id="KW-0597">Phosphoprotein</keyword>
<keyword id="KW-1185">Reference proteome</keyword>
<keyword id="KW-0804">Transcription</keyword>
<keyword id="KW-0805">Transcription regulation</keyword>
<keyword id="KW-0832">Ubl conjugation</keyword>
<proteinExistence type="evidence at protein level"/>
<sequence length="505" mass="53649">MDPENKKSATGAAAILDLDPDFEPQSRPRSCTWPLPRPDLATEPHEPSEVEPSLGQKVPTEGHSEPILLPSRLPEPAGGPQPGILGAVTGPRKGGSRRNAWGNQSYAELISQAIESAPEKRLTLAQIYEWMVRTVPYFKDKGDSNSSAGWKNSIRHNLSLHSKFIKVHNEATGKSSWWMLNPDGGKGGKAPRRRAASMDSSSKLLRGRSKGPKKKPSVLPAPPEGATPRSPLGHFAKWSSSPCPRNREEADVWTTFRPRSSSNASTVSTRLSPMRPESEVLAEEEMPASASSYAGGVPPTLSEDLELLDGLNLASPHSLLSRSGLSGFSLQHPGLAGPLHSYGASLFGPIDGSLSAGEGCFSSSQSLEALLTSDTPPPPADVLMTQVDPILSQAPTLLLLGGMPSSSKLGTGVSLCPTPLEGPGPSNLVPNLSVMAPPPVMAGAPIPKVLGTPVLASPTEDSSHDRMPQDLDLDMYMENLECDMDNIISDLMDGEGLDFNFEPDP</sequence>
<name>FOXO4_MOUSE</name>
<accession>Q9WVH3</accession>
<organism>
    <name type="scientific">Mus musculus</name>
    <name type="common">Mouse</name>
    <dbReference type="NCBI Taxonomy" id="10090"/>
    <lineage>
        <taxon>Eukaryota</taxon>
        <taxon>Metazoa</taxon>
        <taxon>Chordata</taxon>
        <taxon>Craniata</taxon>
        <taxon>Vertebrata</taxon>
        <taxon>Euteleostomi</taxon>
        <taxon>Mammalia</taxon>
        <taxon>Eutheria</taxon>
        <taxon>Euarchontoglires</taxon>
        <taxon>Glires</taxon>
        <taxon>Rodentia</taxon>
        <taxon>Myomorpha</taxon>
        <taxon>Muroidea</taxon>
        <taxon>Muridae</taxon>
        <taxon>Murinae</taxon>
        <taxon>Mus</taxon>
        <taxon>Mus</taxon>
    </lineage>
</organism>
<reference key="1">
    <citation type="journal article" date="2001" name="Mamm. Genome">
        <title>Identification and characterization of members of the FKHR (FOX O) subclass of winged-helix transcription factors in the mouse.</title>
        <authorList>
            <person name="Biggs W.H. III"/>
            <person name="Cavenee W.K."/>
            <person name="Arden K.C."/>
        </authorList>
    </citation>
    <scope>NUCLEOTIDE SEQUENCE [MRNA]</scope>
    <scope>TISSUE SPECIFICITY</scope>
    <source>
        <tissue>Embryo</tissue>
    </source>
</reference>
<reference key="2">
    <citation type="submission" date="1999-09" db="EMBL/GenBank/DDBJ databases">
        <title>Mouse AFX, a forkhead type transcription factor.</title>
        <authorList>
            <person name="Furuyama T."/>
            <person name="Nakazawa T."/>
            <person name="Mori N."/>
        </authorList>
    </citation>
    <scope>NUCLEOTIDE SEQUENCE [MRNA]</scope>
</reference>
<reference key="3">
    <citation type="journal article" date="2005" name="Dev. Cell">
        <title>Phenotypic modulation of smooth muscle cells through interaction of Foxo4 and myocardin.</title>
        <authorList>
            <person name="Liu Z.-P."/>
            <person name="Wang Z."/>
            <person name="Yanagisawa H."/>
            <person name="Olson E.N."/>
        </authorList>
    </citation>
    <scope>FUNCTION</scope>
    <scope>INDUCTION</scope>
</reference>
<reference key="4">
    <citation type="journal article" date="2012" name="EMBO J.">
        <title>Novel repressor regulates insulin sensitivity through interaction with Foxo1.</title>
        <authorList>
            <person name="Nakae J."/>
            <person name="Cao Y."/>
            <person name="Hakuno F."/>
            <person name="Takemori H."/>
            <person name="Kawano Y."/>
            <person name="Sekioka R."/>
            <person name="Abe T."/>
            <person name="Kiyonari H."/>
            <person name="Tanaka T."/>
            <person name="Sakai J."/>
            <person name="Takahashi S."/>
            <person name="Itoh H."/>
        </authorList>
    </citation>
    <scope>TISSUE SPECIFICITY</scope>
</reference>
<reference key="5">
    <citation type="journal article" date="2012" name="J. Cell Sci.">
        <title>Foxk1 promotes cell proliferation and represses myogenic differentiation by regulating Foxo4 and Mef2.</title>
        <authorList>
            <person name="Shi X."/>
            <person name="Wallis A.M."/>
            <person name="Gerard R.D."/>
            <person name="Voelker K.A."/>
            <person name="Grange R.W."/>
            <person name="DePinho R.A."/>
            <person name="Garry M.G."/>
            <person name="Garry D.J."/>
        </authorList>
    </citation>
    <scope>INTERACTION WITH FOXK1</scope>
</reference>
<dbReference type="EMBL" id="AF114260">
    <property type="protein sequence ID" value="AAD42108.1"/>
    <property type="molecule type" value="mRNA"/>
</dbReference>
<dbReference type="EMBL" id="AB032770">
    <property type="protein sequence ID" value="BAA86199.1"/>
    <property type="molecule type" value="mRNA"/>
</dbReference>
<dbReference type="CCDS" id="CCDS41077.1"/>
<dbReference type="RefSeq" id="NP_061259.1">
    <property type="nucleotide sequence ID" value="NM_018789.2"/>
</dbReference>
<dbReference type="BMRB" id="Q9WVH3"/>
<dbReference type="SMR" id="Q9WVH3"/>
<dbReference type="BioGRID" id="207680">
    <property type="interactions" value="1"/>
</dbReference>
<dbReference type="CORUM" id="Q9WVH3"/>
<dbReference type="FunCoup" id="Q9WVH3">
    <property type="interactions" value="2025"/>
</dbReference>
<dbReference type="IntAct" id="Q9WVH3">
    <property type="interactions" value="2"/>
</dbReference>
<dbReference type="MINT" id="Q9WVH3"/>
<dbReference type="STRING" id="10090.ENSMUSP00000059420"/>
<dbReference type="iPTMnet" id="Q9WVH3"/>
<dbReference type="PhosphoSitePlus" id="Q9WVH3"/>
<dbReference type="PaxDb" id="10090-ENSMUSP00000059420"/>
<dbReference type="ProteomicsDB" id="271715"/>
<dbReference type="Antibodypedia" id="6096">
    <property type="antibodies" value="1042 antibodies from 45 providers"/>
</dbReference>
<dbReference type="DNASU" id="54601"/>
<dbReference type="Ensembl" id="ENSMUST00000062000.6">
    <property type="protein sequence ID" value="ENSMUSP00000059420.5"/>
    <property type="gene ID" value="ENSMUSG00000042903.9"/>
</dbReference>
<dbReference type="GeneID" id="54601"/>
<dbReference type="KEGG" id="mmu:54601"/>
<dbReference type="UCSC" id="uc009twz.2">
    <property type="organism name" value="mouse"/>
</dbReference>
<dbReference type="AGR" id="MGI:1891915"/>
<dbReference type="CTD" id="4303"/>
<dbReference type="MGI" id="MGI:1891915">
    <property type="gene designation" value="Foxo4"/>
</dbReference>
<dbReference type="VEuPathDB" id="HostDB:ENSMUSG00000042903"/>
<dbReference type="eggNOG" id="KOG2294">
    <property type="taxonomic scope" value="Eukaryota"/>
</dbReference>
<dbReference type="GeneTree" id="ENSGT00940000159334"/>
<dbReference type="InParanoid" id="Q9WVH3"/>
<dbReference type="OMA" id="VHTEGHS"/>
<dbReference type="OrthoDB" id="5954824at2759"/>
<dbReference type="PhylomeDB" id="Q9WVH3"/>
<dbReference type="TreeFam" id="TF315583"/>
<dbReference type="Reactome" id="R-MMU-198693">
    <property type="pathway name" value="AKT phosphorylates targets in the nucleus"/>
</dbReference>
<dbReference type="Reactome" id="R-MMU-5689880">
    <property type="pathway name" value="Ub-specific processing proteases"/>
</dbReference>
<dbReference type="Reactome" id="R-MMU-9614399">
    <property type="pathway name" value="Regulation of localization of FOXO transcription factors"/>
</dbReference>
<dbReference type="Reactome" id="R-MMU-9615017">
    <property type="pathway name" value="FOXO-mediated transcription of oxidative stress, metabolic and neuronal genes"/>
</dbReference>
<dbReference type="Reactome" id="R-MMU-9617828">
    <property type="pathway name" value="FOXO-mediated transcription of cell cycle genes"/>
</dbReference>
<dbReference type="BioGRID-ORCS" id="54601">
    <property type="hits" value="2 hits in 82 CRISPR screens"/>
</dbReference>
<dbReference type="ChiTaRS" id="Foxo4">
    <property type="organism name" value="mouse"/>
</dbReference>
<dbReference type="PRO" id="PR:Q9WVH3"/>
<dbReference type="Proteomes" id="UP000000589">
    <property type="component" value="Chromosome X"/>
</dbReference>
<dbReference type="RNAct" id="Q9WVH3">
    <property type="molecule type" value="protein"/>
</dbReference>
<dbReference type="Bgee" id="ENSMUSG00000042903">
    <property type="expression patterns" value="Expressed in placenta labyrinth and 198 other cell types or tissues"/>
</dbReference>
<dbReference type="ExpressionAtlas" id="Q9WVH3">
    <property type="expression patterns" value="baseline and differential"/>
</dbReference>
<dbReference type="GO" id="GO:0005829">
    <property type="term" value="C:cytosol"/>
    <property type="evidence" value="ECO:0000250"/>
    <property type="project" value="UniProtKB"/>
</dbReference>
<dbReference type="GO" id="GO:0016607">
    <property type="term" value="C:nuclear speck"/>
    <property type="evidence" value="ECO:0007669"/>
    <property type="project" value="Ensembl"/>
</dbReference>
<dbReference type="GO" id="GO:0005654">
    <property type="term" value="C:nucleoplasm"/>
    <property type="evidence" value="ECO:0000304"/>
    <property type="project" value="Reactome"/>
</dbReference>
<dbReference type="GO" id="GO:0005634">
    <property type="term" value="C:nucleus"/>
    <property type="evidence" value="ECO:0000250"/>
    <property type="project" value="UniProtKB"/>
</dbReference>
<dbReference type="GO" id="GO:0008013">
    <property type="term" value="F:beta-catenin binding"/>
    <property type="evidence" value="ECO:0007669"/>
    <property type="project" value="Ensembl"/>
</dbReference>
<dbReference type="GO" id="GO:0003677">
    <property type="term" value="F:DNA binding"/>
    <property type="evidence" value="ECO:0000250"/>
    <property type="project" value="UniProtKB"/>
</dbReference>
<dbReference type="GO" id="GO:0001228">
    <property type="term" value="F:DNA-binding transcription activator activity, RNA polymerase II-specific"/>
    <property type="evidence" value="ECO:0007669"/>
    <property type="project" value="Ensembl"/>
</dbReference>
<dbReference type="GO" id="GO:0003700">
    <property type="term" value="F:DNA-binding transcription factor activity"/>
    <property type="evidence" value="ECO:0000250"/>
    <property type="project" value="UniProtKB"/>
</dbReference>
<dbReference type="GO" id="GO:0140297">
    <property type="term" value="F:DNA-binding transcription factor binding"/>
    <property type="evidence" value="ECO:0000250"/>
    <property type="project" value="UniProtKB"/>
</dbReference>
<dbReference type="GO" id="GO:0019899">
    <property type="term" value="F:enzyme binding"/>
    <property type="evidence" value="ECO:0000250"/>
    <property type="project" value="UniProtKB"/>
</dbReference>
<dbReference type="GO" id="GO:0042802">
    <property type="term" value="F:identical protein binding"/>
    <property type="evidence" value="ECO:0007669"/>
    <property type="project" value="Ensembl"/>
</dbReference>
<dbReference type="GO" id="GO:1990841">
    <property type="term" value="F:promoter-specific chromatin binding"/>
    <property type="evidence" value="ECO:0007669"/>
    <property type="project" value="Ensembl"/>
</dbReference>
<dbReference type="GO" id="GO:0043565">
    <property type="term" value="F:sequence-specific DNA binding"/>
    <property type="evidence" value="ECO:0000314"/>
    <property type="project" value="MGI"/>
</dbReference>
<dbReference type="GO" id="GO:1990837">
    <property type="term" value="F:sequence-specific double-stranded DNA binding"/>
    <property type="evidence" value="ECO:0007669"/>
    <property type="project" value="Ensembl"/>
</dbReference>
<dbReference type="GO" id="GO:0008286">
    <property type="term" value="P:insulin receptor signaling pathway"/>
    <property type="evidence" value="ECO:0000250"/>
    <property type="project" value="UniProtKB"/>
</dbReference>
<dbReference type="GO" id="GO:0007095">
    <property type="term" value="P:mitotic G2 DNA damage checkpoint signaling"/>
    <property type="evidence" value="ECO:0000314"/>
    <property type="project" value="MGI"/>
</dbReference>
<dbReference type="GO" id="GO:0007517">
    <property type="term" value="P:muscle organ development"/>
    <property type="evidence" value="ECO:0007669"/>
    <property type="project" value="UniProtKB-KW"/>
</dbReference>
<dbReference type="GO" id="GO:0016525">
    <property type="term" value="P:negative regulation of angiogenesis"/>
    <property type="evidence" value="ECO:0000250"/>
    <property type="project" value="UniProtKB"/>
</dbReference>
<dbReference type="GO" id="GO:0008285">
    <property type="term" value="P:negative regulation of cell population proliferation"/>
    <property type="evidence" value="ECO:0000314"/>
    <property type="project" value="MGI"/>
</dbReference>
<dbReference type="GO" id="GO:0070317">
    <property type="term" value="P:negative regulation of G0 to G1 transition"/>
    <property type="evidence" value="ECO:0000250"/>
    <property type="project" value="UniProtKB"/>
</dbReference>
<dbReference type="GO" id="GO:0051151">
    <property type="term" value="P:negative regulation of smooth muscle cell differentiation"/>
    <property type="evidence" value="ECO:0000250"/>
    <property type="project" value="UniProtKB"/>
</dbReference>
<dbReference type="GO" id="GO:0045893">
    <property type="term" value="P:positive regulation of DNA-templated transcription"/>
    <property type="evidence" value="ECO:0000314"/>
    <property type="project" value="MGI"/>
</dbReference>
<dbReference type="GO" id="GO:0014911">
    <property type="term" value="P:positive regulation of smooth muscle cell migration"/>
    <property type="evidence" value="ECO:0007669"/>
    <property type="project" value="Ensembl"/>
</dbReference>
<dbReference type="GO" id="GO:0006355">
    <property type="term" value="P:regulation of DNA-templated transcription"/>
    <property type="evidence" value="ECO:0000250"/>
    <property type="project" value="UniProtKB"/>
</dbReference>
<dbReference type="GO" id="GO:0031667">
    <property type="term" value="P:response to nutrient levels"/>
    <property type="evidence" value="ECO:0007669"/>
    <property type="project" value="Ensembl"/>
</dbReference>
<dbReference type="GO" id="GO:0006979">
    <property type="term" value="P:response to oxidative stress"/>
    <property type="evidence" value="ECO:0007669"/>
    <property type="project" value="Ensembl"/>
</dbReference>
<dbReference type="GO" id="GO:1990785">
    <property type="term" value="P:response to water-immersion restraint stress"/>
    <property type="evidence" value="ECO:0007669"/>
    <property type="project" value="Ensembl"/>
</dbReference>
<dbReference type="GO" id="GO:0048863">
    <property type="term" value="P:stem cell differentiation"/>
    <property type="evidence" value="ECO:0000250"/>
    <property type="project" value="UniProtKB"/>
</dbReference>
<dbReference type="CDD" id="cd20062">
    <property type="entry name" value="FH_FOXO4"/>
    <property type="match status" value="1"/>
</dbReference>
<dbReference type="FunFam" id="1.10.10.10:FF:000032">
    <property type="entry name" value="Forkhead box protein O4"/>
    <property type="match status" value="1"/>
</dbReference>
<dbReference type="Gene3D" id="1.10.10.10">
    <property type="entry name" value="Winged helix-like DNA-binding domain superfamily/Winged helix DNA-binding domain"/>
    <property type="match status" value="1"/>
</dbReference>
<dbReference type="InterPro" id="IPR047409">
    <property type="entry name" value="FH_FOXO4"/>
</dbReference>
<dbReference type="InterPro" id="IPR001766">
    <property type="entry name" value="Fork_head_dom"/>
</dbReference>
<dbReference type="InterPro" id="IPR032067">
    <property type="entry name" value="FOXO-TAD"/>
</dbReference>
<dbReference type="InterPro" id="IPR030456">
    <property type="entry name" value="TF_fork_head_CS_2"/>
</dbReference>
<dbReference type="InterPro" id="IPR036388">
    <property type="entry name" value="WH-like_DNA-bd_sf"/>
</dbReference>
<dbReference type="InterPro" id="IPR036390">
    <property type="entry name" value="WH_DNA-bd_sf"/>
</dbReference>
<dbReference type="PANTHER" id="PTHR45767">
    <property type="entry name" value="FORKHEAD BOX PROTEIN O"/>
    <property type="match status" value="1"/>
</dbReference>
<dbReference type="PANTHER" id="PTHR45767:SF3">
    <property type="entry name" value="FORKHEAD BOX PROTEIN O4"/>
    <property type="match status" value="1"/>
</dbReference>
<dbReference type="Pfam" id="PF00250">
    <property type="entry name" value="Forkhead"/>
    <property type="match status" value="1"/>
</dbReference>
<dbReference type="Pfam" id="PF16676">
    <property type="entry name" value="FOXO-TAD"/>
    <property type="match status" value="1"/>
</dbReference>
<dbReference type="PRINTS" id="PR00053">
    <property type="entry name" value="FORKHEAD"/>
</dbReference>
<dbReference type="SMART" id="SM00339">
    <property type="entry name" value="FH"/>
    <property type="match status" value="1"/>
</dbReference>
<dbReference type="SUPFAM" id="SSF46785">
    <property type="entry name" value="Winged helix' DNA-binding domain"/>
    <property type="match status" value="1"/>
</dbReference>
<dbReference type="PROSITE" id="PS00658">
    <property type="entry name" value="FORK_HEAD_2"/>
    <property type="match status" value="1"/>
</dbReference>
<dbReference type="PROSITE" id="PS50039">
    <property type="entry name" value="FORK_HEAD_3"/>
    <property type="match status" value="1"/>
</dbReference>
<feature type="chain" id="PRO_0000091876" description="Forkhead box protein O4">
    <location>
        <begin position="1"/>
        <end position="505"/>
    </location>
</feature>
<feature type="DNA-binding region" description="Fork-head" evidence="2">
    <location>
        <begin position="100"/>
        <end position="188"/>
    </location>
</feature>
<feature type="region of interest" description="Disordered" evidence="3">
    <location>
        <begin position="1"/>
        <end position="66"/>
    </location>
</feature>
<feature type="region of interest" description="Required for interaction with FOXK1" evidence="7">
    <location>
        <begin position="97"/>
        <end position="215"/>
    </location>
</feature>
<feature type="region of interest" description="Disordered" evidence="3">
    <location>
        <begin position="175"/>
        <end position="244"/>
    </location>
</feature>
<feature type="region of interest" description="Disordered" evidence="3">
    <location>
        <begin position="257"/>
        <end position="276"/>
    </location>
</feature>
<feature type="compositionally biased region" description="Basic residues" evidence="3">
    <location>
        <begin position="205"/>
        <end position="216"/>
    </location>
</feature>
<feature type="compositionally biased region" description="Polar residues" evidence="3">
    <location>
        <begin position="257"/>
        <end position="271"/>
    </location>
</feature>
<feature type="modified residue" description="Phosphothreonine; by PKB/AKT1" evidence="1">
    <location>
        <position position="32"/>
    </location>
</feature>
<feature type="modified residue" description="Phosphoserine; by PKB/AKT1" evidence="1">
    <location>
        <position position="197"/>
    </location>
</feature>
<feature type="modified residue" description="Phosphoserine; by PKB/AKT1" evidence="1">
    <location>
        <position position="262"/>
    </location>
</feature>
<protein>
    <recommendedName>
        <fullName>Forkhead box protein O4</fullName>
    </recommendedName>
    <alternativeName>
        <fullName>Afxh</fullName>
    </alternativeName>
    <alternativeName>
        <fullName>Fork head domain transcription factor AFX1</fullName>
    </alternativeName>
</protein>